<geneLocation type="chloroplast"/>
<gene>
    <name evidence="1" type="primary">psaI</name>
</gene>
<comment type="function">
    <text evidence="1">May help in the organization of the PsaL subunit.</text>
</comment>
<comment type="subcellular location">
    <subcellularLocation>
        <location evidence="1">Plastid</location>
        <location evidence="1">Chloroplast thylakoid membrane</location>
        <topology evidence="1">Single-pass membrane protein</topology>
    </subcellularLocation>
</comment>
<comment type="similarity">
    <text evidence="1">Belongs to the PsaI family.</text>
</comment>
<sequence>MTDLNLPSIFVPLVGLLFPAIAMVSLFFHVQKNKIV</sequence>
<accession>Q6EW69</accession>
<dbReference type="EMBL" id="AJ627251">
    <property type="protein sequence ID" value="CAF28603.1"/>
    <property type="molecule type" value="Genomic_DNA"/>
</dbReference>
<dbReference type="RefSeq" id="YP_053165.1">
    <property type="nucleotide sequence ID" value="NC_006050.1"/>
</dbReference>
<dbReference type="SMR" id="Q6EW69"/>
<dbReference type="GeneID" id="2896238"/>
<dbReference type="GO" id="GO:0009535">
    <property type="term" value="C:chloroplast thylakoid membrane"/>
    <property type="evidence" value="ECO:0007669"/>
    <property type="project" value="UniProtKB-SubCell"/>
</dbReference>
<dbReference type="GO" id="GO:0009522">
    <property type="term" value="C:photosystem I"/>
    <property type="evidence" value="ECO:0007669"/>
    <property type="project" value="UniProtKB-KW"/>
</dbReference>
<dbReference type="GO" id="GO:0015979">
    <property type="term" value="P:photosynthesis"/>
    <property type="evidence" value="ECO:0007669"/>
    <property type="project" value="UniProtKB-UniRule"/>
</dbReference>
<dbReference type="HAMAP" id="MF_00431">
    <property type="entry name" value="PSI_PsaI"/>
    <property type="match status" value="1"/>
</dbReference>
<dbReference type="InterPro" id="IPR001302">
    <property type="entry name" value="PSI_PsaI"/>
</dbReference>
<dbReference type="InterPro" id="IPR036357">
    <property type="entry name" value="PSI_PsaI_sf"/>
</dbReference>
<dbReference type="NCBIfam" id="TIGR03052">
    <property type="entry name" value="PS_I_psaI"/>
    <property type="match status" value="1"/>
</dbReference>
<dbReference type="PANTHER" id="PTHR35775">
    <property type="match status" value="1"/>
</dbReference>
<dbReference type="PANTHER" id="PTHR35775:SF2">
    <property type="entry name" value="PHOTOSYSTEM I REACTION CENTER SUBUNIT VIII"/>
    <property type="match status" value="1"/>
</dbReference>
<dbReference type="Pfam" id="PF00796">
    <property type="entry name" value="PSI_8"/>
    <property type="match status" value="1"/>
</dbReference>
<dbReference type="SUPFAM" id="SSF81540">
    <property type="entry name" value="Subunit VIII of photosystem I reaction centre, PsaI"/>
    <property type="match status" value="1"/>
</dbReference>
<organism>
    <name type="scientific">Nymphaea alba</name>
    <name type="common">White water-lily</name>
    <name type="synonym">Castalia alba</name>
    <dbReference type="NCBI Taxonomy" id="34301"/>
    <lineage>
        <taxon>Eukaryota</taxon>
        <taxon>Viridiplantae</taxon>
        <taxon>Streptophyta</taxon>
        <taxon>Embryophyta</taxon>
        <taxon>Tracheophyta</taxon>
        <taxon>Spermatophyta</taxon>
        <taxon>Magnoliopsida</taxon>
        <taxon>Nymphaeales</taxon>
        <taxon>Nymphaeaceae</taxon>
        <taxon>Nymphaea</taxon>
    </lineage>
</organism>
<proteinExistence type="inferred from homology"/>
<reference key="1">
    <citation type="journal article" date="2004" name="Mol. Biol. Evol.">
        <title>The chloroplast genome of Nymphaea alba: whole-genome analyses and the problem of identifying the most basal angiosperm.</title>
        <authorList>
            <person name="Goremykin V.V."/>
            <person name="Hirsch-Ernst K.I."/>
            <person name="Woelfl S."/>
            <person name="Hellwig F.H."/>
        </authorList>
    </citation>
    <scope>NUCLEOTIDE SEQUENCE [LARGE SCALE GENOMIC DNA]</scope>
</reference>
<feature type="chain" id="PRO_0000194662" description="Photosystem I reaction center subunit VIII">
    <location>
        <begin position="1"/>
        <end position="36"/>
    </location>
</feature>
<feature type="transmembrane region" description="Helical" evidence="1">
    <location>
        <begin position="6"/>
        <end position="28"/>
    </location>
</feature>
<name>PSAI_NYMAL</name>
<protein>
    <recommendedName>
        <fullName evidence="1">Photosystem I reaction center subunit VIII</fullName>
        <shortName evidence="1">PSI-I</shortName>
    </recommendedName>
</protein>
<keyword id="KW-0150">Chloroplast</keyword>
<keyword id="KW-0472">Membrane</keyword>
<keyword id="KW-0602">Photosynthesis</keyword>
<keyword id="KW-0603">Photosystem I</keyword>
<keyword id="KW-0934">Plastid</keyword>
<keyword id="KW-0793">Thylakoid</keyword>
<keyword id="KW-0812">Transmembrane</keyword>
<keyword id="KW-1133">Transmembrane helix</keyword>
<evidence type="ECO:0000255" key="1">
    <source>
        <dbReference type="HAMAP-Rule" id="MF_00431"/>
    </source>
</evidence>